<proteinExistence type="inferred from homology"/>
<accession>Q38XM4</accession>
<reference key="1">
    <citation type="journal article" date="2005" name="Nat. Biotechnol.">
        <title>The complete genome sequence of the meat-borne lactic acid bacterium Lactobacillus sakei 23K.</title>
        <authorList>
            <person name="Chaillou S."/>
            <person name="Champomier-Verges M.-C."/>
            <person name="Cornet M."/>
            <person name="Crutz-Le Coq A.-M."/>
            <person name="Dudez A.-M."/>
            <person name="Martin V."/>
            <person name="Beaufils S."/>
            <person name="Darbon-Rongere E."/>
            <person name="Bossy R."/>
            <person name="Loux V."/>
            <person name="Zagorec M."/>
        </authorList>
    </citation>
    <scope>NUCLEOTIDE SEQUENCE [LARGE SCALE GENOMIC DNA]</scope>
    <source>
        <strain>23K</strain>
    </source>
</reference>
<protein>
    <recommendedName>
        <fullName evidence="1">Cell division protein SepF</fullName>
    </recommendedName>
</protein>
<name>SEPF_LATSS</name>
<feature type="chain" id="PRO_0000334025" description="Cell division protein SepF">
    <location>
        <begin position="1"/>
        <end position="144"/>
    </location>
</feature>
<feature type="region of interest" description="Disordered" evidence="2">
    <location>
        <begin position="21"/>
        <end position="40"/>
    </location>
</feature>
<feature type="compositionally biased region" description="Polar residues" evidence="2">
    <location>
        <begin position="21"/>
        <end position="38"/>
    </location>
</feature>
<keyword id="KW-0131">Cell cycle</keyword>
<keyword id="KW-0132">Cell division</keyword>
<keyword id="KW-0963">Cytoplasm</keyword>
<keyword id="KW-1185">Reference proteome</keyword>
<keyword id="KW-0717">Septation</keyword>
<comment type="function">
    <text evidence="1">Cell division protein that is part of the divisome complex and is recruited early to the Z-ring. Probably stimulates Z-ring formation, perhaps through the cross-linking of FtsZ protofilaments. Its function overlaps with FtsA.</text>
</comment>
<comment type="subunit">
    <text evidence="1">Homodimer. Interacts with FtsZ.</text>
</comment>
<comment type="subcellular location">
    <subcellularLocation>
        <location evidence="1">Cytoplasm</location>
    </subcellularLocation>
    <text evidence="1">Localizes to the division site, in a FtsZ-dependent manner.</text>
</comment>
<comment type="similarity">
    <text evidence="1">Belongs to the SepF family.</text>
</comment>
<organism>
    <name type="scientific">Latilactobacillus sakei subsp. sakei (strain 23K)</name>
    <name type="common">Lactobacillus sakei subsp. sakei</name>
    <dbReference type="NCBI Taxonomy" id="314315"/>
    <lineage>
        <taxon>Bacteria</taxon>
        <taxon>Bacillati</taxon>
        <taxon>Bacillota</taxon>
        <taxon>Bacilli</taxon>
        <taxon>Lactobacillales</taxon>
        <taxon>Lactobacillaceae</taxon>
        <taxon>Latilactobacillus</taxon>
    </lineage>
</organism>
<gene>
    <name evidence="1" type="primary">sepF</name>
    <name type="ordered locus">LCA_0752</name>
</gene>
<sequence>MAGKFSFSNFFGMTEDEDYSTDLQGTKTTDEVSPTSRPDNIISMTAAGNAKMNKIVLCEPRIYSDAKKVGKHLLENKAVIVNFTRIEGAQASRIIDFLTGTVFAINGEIQRVGEQIFLCTPPNYEIDGNLSDIIDQNDFDSEVN</sequence>
<dbReference type="EMBL" id="CR936503">
    <property type="protein sequence ID" value="CAI55056.1"/>
    <property type="molecule type" value="Genomic_DNA"/>
</dbReference>
<dbReference type="RefSeq" id="WP_011374459.1">
    <property type="nucleotide sequence ID" value="NC_007576.1"/>
</dbReference>
<dbReference type="SMR" id="Q38XM4"/>
<dbReference type="STRING" id="314315.LCA_0752"/>
<dbReference type="GeneID" id="57133615"/>
<dbReference type="KEGG" id="lsa:LCA_0752"/>
<dbReference type="eggNOG" id="COG1799">
    <property type="taxonomic scope" value="Bacteria"/>
</dbReference>
<dbReference type="HOGENOM" id="CLU_078499_4_1_9"/>
<dbReference type="OrthoDB" id="9815206at2"/>
<dbReference type="Proteomes" id="UP000002707">
    <property type="component" value="Chromosome"/>
</dbReference>
<dbReference type="GO" id="GO:0005737">
    <property type="term" value="C:cytoplasm"/>
    <property type="evidence" value="ECO:0007669"/>
    <property type="project" value="UniProtKB-SubCell"/>
</dbReference>
<dbReference type="GO" id="GO:0000917">
    <property type="term" value="P:division septum assembly"/>
    <property type="evidence" value="ECO:0007669"/>
    <property type="project" value="UniProtKB-KW"/>
</dbReference>
<dbReference type="GO" id="GO:0043093">
    <property type="term" value="P:FtsZ-dependent cytokinesis"/>
    <property type="evidence" value="ECO:0007669"/>
    <property type="project" value="UniProtKB-UniRule"/>
</dbReference>
<dbReference type="Gene3D" id="3.30.110.150">
    <property type="entry name" value="SepF-like protein"/>
    <property type="match status" value="1"/>
</dbReference>
<dbReference type="HAMAP" id="MF_01197">
    <property type="entry name" value="SepF"/>
    <property type="match status" value="1"/>
</dbReference>
<dbReference type="InterPro" id="IPR023052">
    <property type="entry name" value="Cell_div_SepF"/>
</dbReference>
<dbReference type="InterPro" id="IPR007561">
    <property type="entry name" value="Cell_div_SepF/SepF-rel"/>
</dbReference>
<dbReference type="InterPro" id="IPR038594">
    <property type="entry name" value="SepF-like_sf"/>
</dbReference>
<dbReference type="PANTHER" id="PTHR35798">
    <property type="entry name" value="CELL DIVISION PROTEIN SEPF"/>
    <property type="match status" value="1"/>
</dbReference>
<dbReference type="PANTHER" id="PTHR35798:SF1">
    <property type="entry name" value="CELL DIVISION PROTEIN SEPF"/>
    <property type="match status" value="1"/>
</dbReference>
<dbReference type="Pfam" id="PF04472">
    <property type="entry name" value="SepF"/>
    <property type="match status" value="1"/>
</dbReference>
<evidence type="ECO:0000255" key="1">
    <source>
        <dbReference type="HAMAP-Rule" id="MF_01197"/>
    </source>
</evidence>
<evidence type="ECO:0000256" key="2">
    <source>
        <dbReference type="SAM" id="MobiDB-lite"/>
    </source>
</evidence>